<gene>
    <name type="primary">YOP1</name>
    <name type="ORF">MGG_12127</name>
</gene>
<protein>
    <recommendedName>
        <fullName>Protein YOP1</fullName>
    </recommendedName>
</protein>
<comment type="function">
    <text evidence="1">Required to generate and maintain the structure of the tubular endoplasmic reticulum network and the vacuole. Induces high curvature in membranes and causes membrane tubule formation. Involved in membrane/vesicle trafficking.</text>
</comment>
<comment type="subunit">
    <text evidence="1">Oligomer.</text>
</comment>
<comment type="subcellular location">
    <subcellularLocation>
        <location evidence="1">Endoplasmic reticulum membrane</location>
        <topology evidence="1">Multi-pass membrane protein</topology>
    </subcellularLocation>
    <subcellularLocation>
        <location evidence="1">Golgi apparatus membrane</location>
        <topology evidence="2">Multi-pass membrane protein</topology>
    </subcellularLocation>
</comment>
<comment type="domain">
    <text evidence="1">The short lumenal loops between transmembrane domains 1 and 2 and between transmembrane domains 3 and 4 may impart a wedge-like configuration, thus deforming membranes.</text>
</comment>
<comment type="similarity">
    <text evidence="3">Belongs to the DP1 family.</text>
</comment>
<dbReference type="EMBL" id="CM001236">
    <property type="protein sequence ID" value="EHA47484.1"/>
    <property type="molecule type" value="Genomic_DNA"/>
</dbReference>
<dbReference type="RefSeq" id="XP_003719851.1">
    <property type="nucleotide sequence ID" value="XM_003719803.1"/>
</dbReference>
<dbReference type="FunCoup" id="Q51VY4">
    <property type="interactions" value="337"/>
</dbReference>
<dbReference type="STRING" id="242507.Q51VY4"/>
<dbReference type="EnsemblFungi" id="MGG_12127T0">
    <property type="protein sequence ID" value="MGG_12127T0"/>
    <property type="gene ID" value="MGG_12127"/>
</dbReference>
<dbReference type="GeneID" id="5049887"/>
<dbReference type="KEGG" id="mgr:MGG_12127"/>
<dbReference type="VEuPathDB" id="FungiDB:MGG_12127"/>
<dbReference type="eggNOG" id="KOG1725">
    <property type="taxonomic scope" value="Eukaryota"/>
</dbReference>
<dbReference type="HOGENOM" id="CLU_028431_2_1_1"/>
<dbReference type="InParanoid" id="Q51VY4"/>
<dbReference type="OMA" id="DTQYWVV"/>
<dbReference type="OrthoDB" id="10009287at2759"/>
<dbReference type="Proteomes" id="UP000009058">
    <property type="component" value="Chromosome 6"/>
</dbReference>
<dbReference type="GO" id="GO:0005789">
    <property type="term" value="C:endoplasmic reticulum membrane"/>
    <property type="evidence" value="ECO:0007669"/>
    <property type="project" value="UniProtKB-SubCell"/>
</dbReference>
<dbReference type="GO" id="GO:0000139">
    <property type="term" value="C:Golgi membrane"/>
    <property type="evidence" value="ECO:0007669"/>
    <property type="project" value="UniProtKB-SubCell"/>
</dbReference>
<dbReference type="InterPro" id="IPR004345">
    <property type="entry name" value="TB2_DP1_HVA22"/>
</dbReference>
<dbReference type="PANTHER" id="PTHR12300">
    <property type="entry name" value="HVA22-LIKE PROTEINS"/>
    <property type="match status" value="1"/>
</dbReference>
<dbReference type="PANTHER" id="PTHR12300:SF161">
    <property type="entry name" value="RECEPTOR EXPRESSION-ENHANCING PROTEIN"/>
    <property type="match status" value="1"/>
</dbReference>
<dbReference type="Pfam" id="PF03134">
    <property type="entry name" value="TB2_DP1_HVA22"/>
    <property type="match status" value="1"/>
</dbReference>
<feature type="chain" id="PRO_0000101854" description="Protein YOP1">
    <location>
        <begin position="1"/>
        <end position="170"/>
    </location>
</feature>
<feature type="topological domain" description="Cytoplasmic" evidence="1">
    <location>
        <begin position="1"/>
        <end position="35"/>
    </location>
</feature>
<feature type="transmembrane region" description="Helical" evidence="1">
    <location>
        <begin position="36"/>
        <end position="55"/>
    </location>
</feature>
<feature type="topological domain" description="Lumenal" evidence="1">
    <location>
        <position position="56"/>
    </location>
</feature>
<feature type="transmembrane region" description="Helical" evidence="1">
    <location>
        <begin position="57"/>
        <end position="76"/>
    </location>
</feature>
<feature type="topological domain" description="Cytoplasmic" evidence="1">
    <location>
        <begin position="77"/>
        <end position="86"/>
    </location>
</feature>
<feature type="transmembrane region" description="Helical" evidence="1">
    <location>
        <begin position="87"/>
        <end position="103"/>
    </location>
</feature>
<feature type="topological domain" description="Lumenal" evidence="1">
    <location>
        <begin position="104"/>
        <end position="105"/>
    </location>
</feature>
<feature type="transmembrane region" description="Helical" evidence="1">
    <location>
        <begin position="106"/>
        <end position="124"/>
    </location>
</feature>
<feature type="topological domain" description="Cytoplasmic" evidence="1">
    <location>
        <begin position="125"/>
        <end position="170"/>
    </location>
</feature>
<evidence type="ECO:0000250" key="1">
    <source>
        <dbReference type="UniProtKB" id="Q12402"/>
    </source>
</evidence>
<evidence type="ECO:0000255" key="2"/>
<evidence type="ECO:0000305" key="3"/>
<organism>
    <name type="scientific">Pyricularia oryzae (strain 70-15 / ATCC MYA-4617 / FGSC 8958)</name>
    <name type="common">Rice blast fungus</name>
    <name type="synonym">Magnaporthe oryzae</name>
    <dbReference type="NCBI Taxonomy" id="242507"/>
    <lineage>
        <taxon>Eukaryota</taxon>
        <taxon>Fungi</taxon>
        <taxon>Dikarya</taxon>
        <taxon>Ascomycota</taxon>
        <taxon>Pezizomycotina</taxon>
        <taxon>Sordariomycetes</taxon>
        <taxon>Sordariomycetidae</taxon>
        <taxon>Magnaporthales</taxon>
        <taxon>Pyriculariaceae</taxon>
        <taxon>Pyricularia</taxon>
    </lineage>
</organism>
<accession>Q51VY4</accession>
<accession>A4R4S4</accession>
<accession>G4NGX4</accession>
<sequence length="170" mass="19327">MSSPQDRAQYYIGQLDRELSKYPALNNLERTTGVPKAYAVVGVVVLYFFLIVFNLGGQLLTNIAGFGIPAYYSLDALFSANKEDDTQWLTYWVVFAMFTVVESLVSVVYWFPFYYMFKFVFLLWLSLPAFKGADIIFRSFLAPTLSRYFVHSRPASSNLRAKADSAGKAE</sequence>
<proteinExistence type="inferred from homology"/>
<keyword id="KW-0256">Endoplasmic reticulum</keyword>
<keyword id="KW-0333">Golgi apparatus</keyword>
<keyword id="KW-0472">Membrane</keyword>
<keyword id="KW-1185">Reference proteome</keyword>
<keyword id="KW-0812">Transmembrane</keyword>
<keyword id="KW-1133">Transmembrane helix</keyword>
<reference key="1">
    <citation type="journal article" date="2005" name="Nature">
        <title>The genome sequence of the rice blast fungus Magnaporthe grisea.</title>
        <authorList>
            <person name="Dean R.A."/>
            <person name="Talbot N.J."/>
            <person name="Ebbole D.J."/>
            <person name="Farman M.L."/>
            <person name="Mitchell T.K."/>
            <person name="Orbach M.J."/>
            <person name="Thon M.R."/>
            <person name="Kulkarni R."/>
            <person name="Xu J.-R."/>
            <person name="Pan H."/>
            <person name="Read N.D."/>
            <person name="Lee Y.-H."/>
            <person name="Carbone I."/>
            <person name="Brown D."/>
            <person name="Oh Y.Y."/>
            <person name="Donofrio N."/>
            <person name="Jeong J.S."/>
            <person name="Soanes D.M."/>
            <person name="Djonovic S."/>
            <person name="Kolomiets E."/>
            <person name="Rehmeyer C."/>
            <person name="Li W."/>
            <person name="Harding M."/>
            <person name="Kim S."/>
            <person name="Lebrun M.-H."/>
            <person name="Bohnert H."/>
            <person name="Coughlan S."/>
            <person name="Butler J."/>
            <person name="Calvo S.E."/>
            <person name="Ma L.-J."/>
            <person name="Nicol R."/>
            <person name="Purcell S."/>
            <person name="Nusbaum C."/>
            <person name="Galagan J.E."/>
            <person name="Birren B.W."/>
        </authorList>
    </citation>
    <scope>NUCLEOTIDE SEQUENCE [LARGE SCALE GENOMIC DNA]</scope>
    <source>
        <strain>70-15 / ATCC MYA-4617 / FGSC 8958</strain>
    </source>
</reference>
<name>YOP1_PYRO7</name>